<feature type="chain" id="PRO_0000241861" description="Orotidine 5'-phosphate decarboxylase">
    <location>
        <begin position="1"/>
        <end position="239"/>
    </location>
</feature>
<feature type="active site" description="Proton donor" evidence="1">
    <location>
        <position position="66"/>
    </location>
</feature>
<feature type="binding site" evidence="1">
    <location>
        <position position="15"/>
    </location>
    <ligand>
        <name>substrate</name>
    </ligand>
</feature>
<feature type="binding site" evidence="1">
    <location>
        <position position="37"/>
    </location>
    <ligand>
        <name>substrate</name>
    </ligand>
</feature>
<feature type="binding site" evidence="1">
    <location>
        <begin position="64"/>
        <end position="73"/>
    </location>
    <ligand>
        <name>substrate</name>
    </ligand>
</feature>
<feature type="binding site" evidence="1">
    <location>
        <position position="126"/>
    </location>
    <ligand>
        <name>substrate</name>
    </ligand>
</feature>
<feature type="binding site" evidence="1">
    <location>
        <position position="187"/>
    </location>
    <ligand>
        <name>substrate</name>
    </ligand>
</feature>
<feature type="binding site" evidence="1">
    <location>
        <position position="196"/>
    </location>
    <ligand>
        <name>substrate</name>
    </ligand>
</feature>
<feature type="binding site" evidence="1">
    <location>
        <position position="216"/>
    </location>
    <ligand>
        <name>substrate</name>
    </ligand>
</feature>
<feature type="binding site" evidence="1">
    <location>
        <position position="217"/>
    </location>
    <ligand>
        <name>substrate</name>
    </ligand>
</feature>
<accession>Q39VY5</accession>
<sequence length="239" mass="25631">MTRDQAREKVIFALDTGEFAHVQYWAETLSDKVGMYKIGKQLFTACGPAAVRMIQKFGGEVFLDLKFHDIPNTVAMASVEAARMGVKLFNLHALGGYEMMAKTVEALDKEFKGGDRAKVLAVTILTSSTEETLKDLGIEHTVPDMVVRLATLARKAGIDGVVASPREIPLIREACGSDFLIVTPGVRPSFAALNDQKRVMTPAEAVKAGSDYLVIGRPIGDAPDPAAAAELILGEIVAG</sequence>
<keyword id="KW-0210">Decarboxylase</keyword>
<keyword id="KW-0456">Lyase</keyword>
<keyword id="KW-0665">Pyrimidine biosynthesis</keyword>
<keyword id="KW-1185">Reference proteome</keyword>
<gene>
    <name evidence="1" type="primary">pyrF</name>
    <name type="ordered locus">Gmet_1355</name>
</gene>
<evidence type="ECO:0000255" key="1">
    <source>
        <dbReference type="HAMAP-Rule" id="MF_01200"/>
    </source>
</evidence>
<proteinExistence type="inferred from homology"/>
<name>PYRF_GEOMG</name>
<reference key="1">
    <citation type="journal article" date="2009" name="BMC Microbiol.">
        <title>The genome sequence of Geobacter metallireducens: features of metabolism, physiology and regulation common and dissimilar to Geobacter sulfurreducens.</title>
        <authorList>
            <person name="Aklujkar M."/>
            <person name="Krushkal J."/>
            <person name="DiBartolo G."/>
            <person name="Lapidus A."/>
            <person name="Land M.L."/>
            <person name="Lovley D.R."/>
        </authorList>
    </citation>
    <scope>NUCLEOTIDE SEQUENCE [LARGE SCALE GENOMIC DNA]</scope>
    <source>
        <strain>ATCC 53774 / DSM 7210 / GS-15</strain>
    </source>
</reference>
<protein>
    <recommendedName>
        <fullName evidence="1">Orotidine 5'-phosphate decarboxylase</fullName>
        <ecNumber evidence="1">4.1.1.23</ecNumber>
    </recommendedName>
    <alternativeName>
        <fullName evidence="1">OMP decarboxylase</fullName>
        <shortName evidence="1">OMPDCase</shortName>
        <shortName evidence="1">OMPdecase</shortName>
    </alternativeName>
</protein>
<dbReference type="EC" id="4.1.1.23" evidence="1"/>
<dbReference type="EMBL" id="CP000148">
    <property type="protein sequence ID" value="ABB31589.1"/>
    <property type="molecule type" value="Genomic_DNA"/>
</dbReference>
<dbReference type="RefSeq" id="WP_004513153.1">
    <property type="nucleotide sequence ID" value="NC_007517.1"/>
</dbReference>
<dbReference type="SMR" id="Q39VY5"/>
<dbReference type="STRING" id="269799.Gmet_1355"/>
<dbReference type="KEGG" id="gme:Gmet_1355"/>
<dbReference type="eggNOG" id="COG0284">
    <property type="taxonomic scope" value="Bacteria"/>
</dbReference>
<dbReference type="HOGENOM" id="CLU_067069_0_0_7"/>
<dbReference type="UniPathway" id="UPA00070">
    <property type="reaction ID" value="UER00120"/>
</dbReference>
<dbReference type="Proteomes" id="UP000007073">
    <property type="component" value="Chromosome"/>
</dbReference>
<dbReference type="GO" id="GO:0005829">
    <property type="term" value="C:cytosol"/>
    <property type="evidence" value="ECO:0007669"/>
    <property type="project" value="TreeGrafter"/>
</dbReference>
<dbReference type="GO" id="GO:0004590">
    <property type="term" value="F:orotidine-5'-phosphate decarboxylase activity"/>
    <property type="evidence" value="ECO:0007669"/>
    <property type="project" value="UniProtKB-UniRule"/>
</dbReference>
<dbReference type="GO" id="GO:0006207">
    <property type="term" value="P:'de novo' pyrimidine nucleobase biosynthetic process"/>
    <property type="evidence" value="ECO:0007669"/>
    <property type="project" value="InterPro"/>
</dbReference>
<dbReference type="GO" id="GO:0044205">
    <property type="term" value="P:'de novo' UMP biosynthetic process"/>
    <property type="evidence" value="ECO:0007669"/>
    <property type="project" value="UniProtKB-UniRule"/>
</dbReference>
<dbReference type="CDD" id="cd04725">
    <property type="entry name" value="OMP_decarboxylase_like"/>
    <property type="match status" value="1"/>
</dbReference>
<dbReference type="FunFam" id="3.20.20.70:FF:000015">
    <property type="entry name" value="Orotidine 5'-phosphate decarboxylase"/>
    <property type="match status" value="1"/>
</dbReference>
<dbReference type="Gene3D" id="3.20.20.70">
    <property type="entry name" value="Aldolase class I"/>
    <property type="match status" value="1"/>
</dbReference>
<dbReference type="HAMAP" id="MF_01200_B">
    <property type="entry name" value="OMPdecase_type1_B"/>
    <property type="match status" value="1"/>
</dbReference>
<dbReference type="InterPro" id="IPR013785">
    <property type="entry name" value="Aldolase_TIM"/>
</dbReference>
<dbReference type="InterPro" id="IPR014732">
    <property type="entry name" value="OMPdecase"/>
</dbReference>
<dbReference type="InterPro" id="IPR018089">
    <property type="entry name" value="OMPdecase_AS"/>
</dbReference>
<dbReference type="InterPro" id="IPR047596">
    <property type="entry name" value="OMPdecase_bac"/>
</dbReference>
<dbReference type="InterPro" id="IPR001754">
    <property type="entry name" value="OMPdeCOase_dom"/>
</dbReference>
<dbReference type="InterPro" id="IPR011060">
    <property type="entry name" value="RibuloseP-bd_barrel"/>
</dbReference>
<dbReference type="NCBIfam" id="NF001273">
    <property type="entry name" value="PRK00230.1"/>
    <property type="match status" value="1"/>
</dbReference>
<dbReference type="NCBIfam" id="TIGR01740">
    <property type="entry name" value="pyrF"/>
    <property type="match status" value="1"/>
</dbReference>
<dbReference type="PANTHER" id="PTHR32119">
    <property type="entry name" value="OROTIDINE 5'-PHOSPHATE DECARBOXYLASE"/>
    <property type="match status" value="1"/>
</dbReference>
<dbReference type="PANTHER" id="PTHR32119:SF2">
    <property type="entry name" value="OROTIDINE 5'-PHOSPHATE DECARBOXYLASE"/>
    <property type="match status" value="1"/>
</dbReference>
<dbReference type="Pfam" id="PF00215">
    <property type="entry name" value="OMPdecase"/>
    <property type="match status" value="1"/>
</dbReference>
<dbReference type="SMART" id="SM00934">
    <property type="entry name" value="OMPdecase"/>
    <property type="match status" value="1"/>
</dbReference>
<dbReference type="SUPFAM" id="SSF51366">
    <property type="entry name" value="Ribulose-phoshate binding barrel"/>
    <property type="match status" value="1"/>
</dbReference>
<dbReference type="PROSITE" id="PS00156">
    <property type="entry name" value="OMPDECASE"/>
    <property type="match status" value="1"/>
</dbReference>
<comment type="function">
    <text evidence="1">Catalyzes the decarboxylation of orotidine 5'-monophosphate (OMP) to uridine 5'-monophosphate (UMP).</text>
</comment>
<comment type="catalytic activity">
    <reaction evidence="1">
        <text>orotidine 5'-phosphate + H(+) = UMP + CO2</text>
        <dbReference type="Rhea" id="RHEA:11596"/>
        <dbReference type="ChEBI" id="CHEBI:15378"/>
        <dbReference type="ChEBI" id="CHEBI:16526"/>
        <dbReference type="ChEBI" id="CHEBI:57538"/>
        <dbReference type="ChEBI" id="CHEBI:57865"/>
        <dbReference type="EC" id="4.1.1.23"/>
    </reaction>
</comment>
<comment type="pathway">
    <text evidence="1">Pyrimidine metabolism; UMP biosynthesis via de novo pathway; UMP from orotate: step 2/2.</text>
</comment>
<comment type="subunit">
    <text evidence="1">Homodimer.</text>
</comment>
<comment type="similarity">
    <text evidence="1">Belongs to the OMP decarboxylase family. Type 1 subfamily.</text>
</comment>
<organism>
    <name type="scientific">Geobacter metallireducens (strain ATCC 53774 / DSM 7210 / GS-15)</name>
    <dbReference type="NCBI Taxonomy" id="269799"/>
    <lineage>
        <taxon>Bacteria</taxon>
        <taxon>Pseudomonadati</taxon>
        <taxon>Thermodesulfobacteriota</taxon>
        <taxon>Desulfuromonadia</taxon>
        <taxon>Geobacterales</taxon>
        <taxon>Geobacteraceae</taxon>
        <taxon>Geobacter</taxon>
    </lineage>
</organism>